<accession>Q2GHE3</accession>
<evidence type="ECO:0000255" key="1">
    <source>
        <dbReference type="HAMAP-Rule" id="MF_00016"/>
    </source>
</evidence>
<keyword id="KW-0067">ATP-binding</keyword>
<keyword id="KW-0963">Cytoplasm</keyword>
<keyword id="KW-0227">DNA damage</keyword>
<keyword id="KW-0233">DNA recombination</keyword>
<keyword id="KW-0234">DNA repair</keyword>
<keyword id="KW-0238">DNA-binding</keyword>
<keyword id="KW-0378">Hydrolase</keyword>
<keyword id="KW-0547">Nucleotide-binding</keyword>
<keyword id="KW-1185">Reference proteome</keyword>
<reference key="1">
    <citation type="journal article" date="2006" name="PLoS Genet.">
        <title>Comparative genomics of emerging human ehrlichiosis agents.</title>
        <authorList>
            <person name="Dunning Hotopp J.C."/>
            <person name="Lin M."/>
            <person name="Madupu R."/>
            <person name="Crabtree J."/>
            <person name="Angiuoli S.V."/>
            <person name="Eisen J.A."/>
            <person name="Seshadri R."/>
            <person name="Ren Q."/>
            <person name="Wu M."/>
            <person name="Utterback T.R."/>
            <person name="Smith S."/>
            <person name="Lewis M."/>
            <person name="Khouri H."/>
            <person name="Zhang C."/>
            <person name="Niu H."/>
            <person name="Lin Q."/>
            <person name="Ohashi N."/>
            <person name="Zhi N."/>
            <person name="Nelson W.C."/>
            <person name="Brinkac L.M."/>
            <person name="Dodson R.J."/>
            <person name="Rosovitz M.J."/>
            <person name="Sundaram J.P."/>
            <person name="Daugherty S.C."/>
            <person name="Davidsen T."/>
            <person name="Durkin A.S."/>
            <person name="Gwinn M.L."/>
            <person name="Haft D.H."/>
            <person name="Selengut J.D."/>
            <person name="Sullivan S.A."/>
            <person name="Zafar N."/>
            <person name="Zhou L."/>
            <person name="Benahmed F."/>
            <person name="Forberger H."/>
            <person name="Halpin R."/>
            <person name="Mulligan S."/>
            <person name="Robinson J."/>
            <person name="White O."/>
            <person name="Rikihisa Y."/>
            <person name="Tettelin H."/>
        </authorList>
    </citation>
    <scope>NUCLEOTIDE SEQUENCE [LARGE SCALE GENOMIC DNA]</scope>
    <source>
        <strain>ATCC CRL-10679 / Arkansas</strain>
    </source>
</reference>
<gene>
    <name evidence="1" type="primary">ruvB</name>
    <name type="ordered locus">ECH_0319</name>
</gene>
<feature type="chain" id="PRO_1000001402" description="Holliday junction branch migration complex subunit RuvB">
    <location>
        <begin position="1"/>
        <end position="329"/>
    </location>
</feature>
<feature type="region of interest" description="Large ATPase domain (RuvB-L)" evidence="1">
    <location>
        <begin position="1"/>
        <end position="180"/>
    </location>
</feature>
<feature type="region of interest" description="Small ATPAse domain (RuvB-S)" evidence="1">
    <location>
        <begin position="181"/>
        <end position="252"/>
    </location>
</feature>
<feature type="region of interest" description="Head domain (RuvB-H)" evidence="1">
    <location>
        <begin position="255"/>
        <end position="329"/>
    </location>
</feature>
<feature type="binding site" evidence="1">
    <location>
        <position position="20"/>
    </location>
    <ligand>
        <name>ATP</name>
        <dbReference type="ChEBI" id="CHEBI:30616"/>
    </ligand>
</feature>
<feature type="binding site" evidence="1">
    <location>
        <position position="61"/>
    </location>
    <ligand>
        <name>ATP</name>
        <dbReference type="ChEBI" id="CHEBI:30616"/>
    </ligand>
</feature>
<feature type="binding site" evidence="1">
    <location>
        <position position="64"/>
    </location>
    <ligand>
        <name>ATP</name>
        <dbReference type="ChEBI" id="CHEBI:30616"/>
    </ligand>
</feature>
<feature type="binding site" evidence="1">
    <location>
        <position position="65"/>
    </location>
    <ligand>
        <name>ATP</name>
        <dbReference type="ChEBI" id="CHEBI:30616"/>
    </ligand>
</feature>
<feature type="binding site" evidence="1">
    <location>
        <position position="65"/>
    </location>
    <ligand>
        <name>Mg(2+)</name>
        <dbReference type="ChEBI" id="CHEBI:18420"/>
    </ligand>
</feature>
<feature type="binding site" evidence="1">
    <location>
        <position position="66"/>
    </location>
    <ligand>
        <name>ATP</name>
        <dbReference type="ChEBI" id="CHEBI:30616"/>
    </ligand>
</feature>
<feature type="binding site" evidence="1">
    <location>
        <begin position="127"/>
        <end position="129"/>
    </location>
    <ligand>
        <name>ATP</name>
        <dbReference type="ChEBI" id="CHEBI:30616"/>
    </ligand>
</feature>
<feature type="binding site" evidence="1">
    <location>
        <position position="170"/>
    </location>
    <ligand>
        <name>ATP</name>
        <dbReference type="ChEBI" id="CHEBI:30616"/>
    </ligand>
</feature>
<feature type="binding site" evidence="1">
    <location>
        <position position="180"/>
    </location>
    <ligand>
        <name>ATP</name>
        <dbReference type="ChEBI" id="CHEBI:30616"/>
    </ligand>
</feature>
<feature type="binding site" evidence="1">
    <location>
        <position position="217"/>
    </location>
    <ligand>
        <name>ATP</name>
        <dbReference type="ChEBI" id="CHEBI:30616"/>
    </ligand>
</feature>
<feature type="binding site" evidence="1">
    <location>
        <position position="308"/>
    </location>
    <ligand>
        <name>DNA</name>
        <dbReference type="ChEBI" id="CHEBI:16991"/>
    </ligand>
</feature>
<feature type="binding site" evidence="1">
    <location>
        <position position="313"/>
    </location>
    <ligand>
        <name>DNA</name>
        <dbReference type="ChEBI" id="CHEBI:16991"/>
    </ligand>
</feature>
<sequence>MKNILQSTECLEDQQNVSMRPNLLDDFIGQSSVVNNLKIFINAAYTRKEPMDHVLLYGPPGLGKTTLAHIIAKELKVNFRSTAGPLLSKAGDLAAILTNLQAKDILFIDEIHRLNRNIEEILYSAMEDFCLDIIVGEGCGARTLRVDLPPFTLVGATTRIGLLSNPLRDRFGIPIHLEFYSTEELTKVIQRAAKVIKTNISNSGAQEISLRSRGTPRIALRLLRRIRDFMEVTEHNKIITDTFADKALLRLGIDKLGLDRQDIQYLKFIYDSNNPTGIDTISSGLSEDTGNIEETIEPYLIKINFIQRTPRGRVITEKAISHLREQEYI</sequence>
<organism>
    <name type="scientific">Ehrlichia chaffeensis (strain ATCC CRL-10679 / Arkansas)</name>
    <dbReference type="NCBI Taxonomy" id="205920"/>
    <lineage>
        <taxon>Bacteria</taxon>
        <taxon>Pseudomonadati</taxon>
        <taxon>Pseudomonadota</taxon>
        <taxon>Alphaproteobacteria</taxon>
        <taxon>Rickettsiales</taxon>
        <taxon>Anaplasmataceae</taxon>
        <taxon>Ehrlichia</taxon>
    </lineage>
</organism>
<comment type="function">
    <text evidence="1">The RuvA-RuvB-RuvC complex processes Holliday junction (HJ) DNA during genetic recombination and DNA repair, while the RuvA-RuvB complex plays an important role in the rescue of blocked DNA replication forks via replication fork reversal (RFR). RuvA specifically binds to HJ cruciform DNA, conferring on it an open structure. The RuvB hexamer acts as an ATP-dependent pump, pulling dsDNA into and through the RuvAB complex. RuvB forms 2 homohexamers on either side of HJ DNA bound by 1 or 2 RuvA tetramers; 4 subunits per hexamer contact DNA at a time. Coordinated motions by a converter formed by DNA-disengaged RuvB subunits stimulates ATP hydrolysis and nucleotide exchange. Immobilization of the converter enables RuvB to convert the ATP-contained energy into a lever motion, pulling 2 nucleotides of DNA out of the RuvA tetramer per ATP hydrolyzed, thus driving DNA branch migration. The RuvB motors rotate together with the DNA substrate, which together with the progressing nucleotide cycle form the mechanistic basis for DNA recombination by continuous HJ branch migration. Branch migration allows RuvC to scan DNA until it finds its consensus sequence, where it cleaves and resolves cruciform DNA.</text>
</comment>
<comment type="catalytic activity">
    <reaction evidence="1">
        <text>ATP + H2O = ADP + phosphate + H(+)</text>
        <dbReference type="Rhea" id="RHEA:13065"/>
        <dbReference type="ChEBI" id="CHEBI:15377"/>
        <dbReference type="ChEBI" id="CHEBI:15378"/>
        <dbReference type="ChEBI" id="CHEBI:30616"/>
        <dbReference type="ChEBI" id="CHEBI:43474"/>
        <dbReference type="ChEBI" id="CHEBI:456216"/>
    </reaction>
</comment>
<comment type="subunit">
    <text evidence="1">Homohexamer. Forms an RuvA(8)-RuvB(12)-Holliday junction (HJ) complex. HJ DNA is sandwiched between 2 RuvA tetramers; dsDNA enters through RuvA and exits via RuvB. An RuvB hexamer assembles on each DNA strand where it exits the tetramer. Each RuvB hexamer is contacted by two RuvA subunits (via domain III) on 2 adjacent RuvB subunits; this complex drives branch migration. In the full resolvosome a probable DNA-RuvA(4)-RuvB(12)-RuvC(2) complex forms which resolves the HJ.</text>
</comment>
<comment type="subcellular location">
    <subcellularLocation>
        <location evidence="1">Cytoplasm</location>
    </subcellularLocation>
</comment>
<comment type="domain">
    <text evidence="1">Has 3 domains, the large (RuvB-L) and small ATPase (RuvB-S) domains and the C-terminal head (RuvB-H) domain. The head domain binds DNA, while the ATPase domains jointly bind ATP, ADP or are empty depending on the state of the subunit in the translocation cycle. During a single DNA translocation step the structure of each domain remains the same, but their relative positions change.</text>
</comment>
<comment type="similarity">
    <text evidence="1">Belongs to the RuvB family.</text>
</comment>
<dbReference type="EC" id="3.6.4.-" evidence="1"/>
<dbReference type="EMBL" id="CP000236">
    <property type="protein sequence ID" value="ABD44562.1"/>
    <property type="molecule type" value="Genomic_DNA"/>
</dbReference>
<dbReference type="RefSeq" id="WP_006010825.1">
    <property type="nucleotide sequence ID" value="NC_007799.1"/>
</dbReference>
<dbReference type="SMR" id="Q2GHE3"/>
<dbReference type="STRING" id="205920.ECH_0319"/>
<dbReference type="KEGG" id="ech:ECH_0319"/>
<dbReference type="eggNOG" id="COG2255">
    <property type="taxonomic scope" value="Bacteria"/>
</dbReference>
<dbReference type="HOGENOM" id="CLU_055599_1_0_5"/>
<dbReference type="OrthoDB" id="9804478at2"/>
<dbReference type="Proteomes" id="UP000008320">
    <property type="component" value="Chromosome"/>
</dbReference>
<dbReference type="GO" id="GO:0005737">
    <property type="term" value="C:cytoplasm"/>
    <property type="evidence" value="ECO:0007669"/>
    <property type="project" value="UniProtKB-SubCell"/>
</dbReference>
<dbReference type="GO" id="GO:0048476">
    <property type="term" value="C:Holliday junction resolvase complex"/>
    <property type="evidence" value="ECO:0007669"/>
    <property type="project" value="UniProtKB-UniRule"/>
</dbReference>
<dbReference type="GO" id="GO:0005524">
    <property type="term" value="F:ATP binding"/>
    <property type="evidence" value="ECO:0007669"/>
    <property type="project" value="UniProtKB-UniRule"/>
</dbReference>
<dbReference type="GO" id="GO:0016887">
    <property type="term" value="F:ATP hydrolysis activity"/>
    <property type="evidence" value="ECO:0007669"/>
    <property type="project" value="InterPro"/>
</dbReference>
<dbReference type="GO" id="GO:0000400">
    <property type="term" value="F:four-way junction DNA binding"/>
    <property type="evidence" value="ECO:0007669"/>
    <property type="project" value="UniProtKB-UniRule"/>
</dbReference>
<dbReference type="GO" id="GO:0009378">
    <property type="term" value="F:four-way junction helicase activity"/>
    <property type="evidence" value="ECO:0007669"/>
    <property type="project" value="InterPro"/>
</dbReference>
<dbReference type="GO" id="GO:0006310">
    <property type="term" value="P:DNA recombination"/>
    <property type="evidence" value="ECO:0007669"/>
    <property type="project" value="UniProtKB-UniRule"/>
</dbReference>
<dbReference type="GO" id="GO:0006281">
    <property type="term" value="P:DNA repair"/>
    <property type="evidence" value="ECO:0007669"/>
    <property type="project" value="UniProtKB-UniRule"/>
</dbReference>
<dbReference type="CDD" id="cd00009">
    <property type="entry name" value="AAA"/>
    <property type="match status" value="1"/>
</dbReference>
<dbReference type="Gene3D" id="1.10.8.60">
    <property type="match status" value="1"/>
</dbReference>
<dbReference type="Gene3D" id="3.40.50.300">
    <property type="entry name" value="P-loop containing nucleotide triphosphate hydrolases"/>
    <property type="match status" value="1"/>
</dbReference>
<dbReference type="Gene3D" id="1.10.10.10">
    <property type="entry name" value="Winged helix-like DNA-binding domain superfamily/Winged helix DNA-binding domain"/>
    <property type="match status" value="1"/>
</dbReference>
<dbReference type="HAMAP" id="MF_00016">
    <property type="entry name" value="DNA_HJ_migration_RuvB"/>
    <property type="match status" value="1"/>
</dbReference>
<dbReference type="InterPro" id="IPR003593">
    <property type="entry name" value="AAA+_ATPase"/>
</dbReference>
<dbReference type="InterPro" id="IPR041445">
    <property type="entry name" value="AAA_lid_4"/>
</dbReference>
<dbReference type="InterPro" id="IPR004605">
    <property type="entry name" value="DNA_helicase_Holl-junc_RuvB"/>
</dbReference>
<dbReference type="InterPro" id="IPR027417">
    <property type="entry name" value="P-loop_NTPase"/>
</dbReference>
<dbReference type="InterPro" id="IPR008824">
    <property type="entry name" value="RuvB-like_N"/>
</dbReference>
<dbReference type="InterPro" id="IPR008823">
    <property type="entry name" value="RuvB_C"/>
</dbReference>
<dbReference type="InterPro" id="IPR036388">
    <property type="entry name" value="WH-like_DNA-bd_sf"/>
</dbReference>
<dbReference type="InterPro" id="IPR036390">
    <property type="entry name" value="WH_DNA-bd_sf"/>
</dbReference>
<dbReference type="NCBIfam" id="NF000868">
    <property type="entry name" value="PRK00080.1"/>
    <property type="match status" value="1"/>
</dbReference>
<dbReference type="NCBIfam" id="TIGR00635">
    <property type="entry name" value="ruvB"/>
    <property type="match status" value="1"/>
</dbReference>
<dbReference type="PANTHER" id="PTHR42848">
    <property type="match status" value="1"/>
</dbReference>
<dbReference type="PANTHER" id="PTHR42848:SF1">
    <property type="entry name" value="HOLLIDAY JUNCTION BRANCH MIGRATION COMPLEX SUBUNIT RUVB"/>
    <property type="match status" value="1"/>
</dbReference>
<dbReference type="Pfam" id="PF17864">
    <property type="entry name" value="AAA_lid_4"/>
    <property type="match status" value="1"/>
</dbReference>
<dbReference type="Pfam" id="PF05491">
    <property type="entry name" value="RuvB_C"/>
    <property type="match status" value="1"/>
</dbReference>
<dbReference type="Pfam" id="PF05496">
    <property type="entry name" value="RuvB_N"/>
    <property type="match status" value="1"/>
</dbReference>
<dbReference type="SMART" id="SM00382">
    <property type="entry name" value="AAA"/>
    <property type="match status" value="1"/>
</dbReference>
<dbReference type="SUPFAM" id="SSF52540">
    <property type="entry name" value="P-loop containing nucleoside triphosphate hydrolases"/>
    <property type="match status" value="1"/>
</dbReference>
<dbReference type="SUPFAM" id="SSF46785">
    <property type="entry name" value="Winged helix' DNA-binding domain"/>
    <property type="match status" value="1"/>
</dbReference>
<name>RUVB_EHRCR</name>
<protein>
    <recommendedName>
        <fullName evidence="1">Holliday junction branch migration complex subunit RuvB</fullName>
        <ecNumber evidence="1">3.6.4.-</ecNumber>
    </recommendedName>
</protein>
<proteinExistence type="inferred from homology"/>